<gene>
    <name evidence="1" type="primary">xerC</name>
    <name type="ordered locus">VV1_1129</name>
</gene>
<dbReference type="EMBL" id="AE016795">
    <property type="protein sequence ID" value="AAO09604.1"/>
    <property type="molecule type" value="Genomic_DNA"/>
</dbReference>
<dbReference type="RefSeq" id="WP_011079144.1">
    <property type="nucleotide sequence ID" value="NC_004459.3"/>
</dbReference>
<dbReference type="SMR" id="Q7ZAI9"/>
<dbReference type="KEGG" id="vvu:VV1_1129"/>
<dbReference type="HOGENOM" id="CLU_027562_9_0_6"/>
<dbReference type="Proteomes" id="UP000002275">
    <property type="component" value="Chromosome 1"/>
</dbReference>
<dbReference type="GO" id="GO:0005737">
    <property type="term" value="C:cytoplasm"/>
    <property type="evidence" value="ECO:0007669"/>
    <property type="project" value="UniProtKB-SubCell"/>
</dbReference>
<dbReference type="GO" id="GO:0003677">
    <property type="term" value="F:DNA binding"/>
    <property type="evidence" value="ECO:0007669"/>
    <property type="project" value="UniProtKB-KW"/>
</dbReference>
<dbReference type="GO" id="GO:0009037">
    <property type="term" value="F:tyrosine-based site-specific recombinase activity"/>
    <property type="evidence" value="ECO:0007669"/>
    <property type="project" value="UniProtKB-UniRule"/>
</dbReference>
<dbReference type="GO" id="GO:0051301">
    <property type="term" value="P:cell division"/>
    <property type="evidence" value="ECO:0007669"/>
    <property type="project" value="UniProtKB-KW"/>
</dbReference>
<dbReference type="GO" id="GO:0007059">
    <property type="term" value="P:chromosome segregation"/>
    <property type="evidence" value="ECO:0007669"/>
    <property type="project" value="UniProtKB-UniRule"/>
</dbReference>
<dbReference type="GO" id="GO:0006313">
    <property type="term" value="P:DNA transposition"/>
    <property type="evidence" value="ECO:0007669"/>
    <property type="project" value="UniProtKB-UniRule"/>
</dbReference>
<dbReference type="CDD" id="cd00798">
    <property type="entry name" value="INT_XerDC_C"/>
    <property type="match status" value="1"/>
</dbReference>
<dbReference type="FunFam" id="1.10.443.10:FF:000002">
    <property type="entry name" value="Tyrosine recombinase XerC"/>
    <property type="match status" value="1"/>
</dbReference>
<dbReference type="Gene3D" id="1.10.150.130">
    <property type="match status" value="1"/>
</dbReference>
<dbReference type="Gene3D" id="1.10.443.10">
    <property type="entry name" value="Intergrase catalytic core"/>
    <property type="match status" value="1"/>
</dbReference>
<dbReference type="HAMAP" id="MF_01808">
    <property type="entry name" value="Recomb_XerC_XerD"/>
    <property type="match status" value="1"/>
</dbReference>
<dbReference type="InterPro" id="IPR044068">
    <property type="entry name" value="CB"/>
</dbReference>
<dbReference type="InterPro" id="IPR011010">
    <property type="entry name" value="DNA_brk_join_enz"/>
</dbReference>
<dbReference type="InterPro" id="IPR013762">
    <property type="entry name" value="Integrase-like_cat_sf"/>
</dbReference>
<dbReference type="InterPro" id="IPR002104">
    <property type="entry name" value="Integrase_catalytic"/>
</dbReference>
<dbReference type="InterPro" id="IPR010998">
    <property type="entry name" value="Integrase_recombinase_N"/>
</dbReference>
<dbReference type="InterPro" id="IPR004107">
    <property type="entry name" value="Integrase_SAM-like_N"/>
</dbReference>
<dbReference type="InterPro" id="IPR011931">
    <property type="entry name" value="Recomb_XerC"/>
</dbReference>
<dbReference type="InterPro" id="IPR023009">
    <property type="entry name" value="Tyrosine_recombinase_XerC/XerD"/>
</dbReference>
<dbReference type="InterPro" id="IPR050090">
    <property type="entry name" value="Tyrosine_recombinase_XerCD"/>
</dbReference>
<dbReference type="NCBIfam" id="NF001399">
    <property type="entry name" value="PRK00283.1"/>
    <property type="match status" value="1"/>
</dbReference>
<dbReference type="NCBIfam" id="TIGR02224">
    <property type="entry name" value="recomb_XerC"/>
    <property type="match status" value="1"/>
</dbReference>
<dbReference type="PANTHER" id="PTHR30349">
    <property type="entry name" value="PHAGE INTEGRASE-RELATED"/>
    <property type="match status" value="1"/>
</dbReference>
<dbReference type="PANTHER" id="PTHR30349:SF81">
    <property type="entry name" value="TYROSINE RECOMBINASE XERC"/>
    <property type="match status" value="1"/>
</dbReference>
<dbReference type="Pfam" id="PF02899">
    <property type="entry name" value="Phage_int_SAM_1"/>
    <property type="match status" value="1"/>
</dbReference>
<dbReference type="Pfam" id="PF00589">
    <property type="entry name" value="Phage_integrase"/>
    <property type="match status" value="1"/>
</dbReference>
<dbReference type="SUPFAM" id="SSF56349">
    <property type="entry name" value="DNA breaking-rejoining enzymes"/>
    <property type="match status" value="1"/>
</dbReference>
<dbReference type="SUPFAM" id="SSF47823">
    <property type="entry name" value="lambda integrase-like, N-terminal domain"/>
    <property type="match status" value="1"/>
</dbReference>
<dbReference type="PROSITE" id="PS51900">
    <property type="entry name" value="CB"/>
    <property type="match status" value="1"/>
</dbReference>
<dbReference type="PROSITE" id="PS51898">
    <property type="entry name" value="TYR_RECOMBINASE"/>
    <property type="match status" value="1"/>
</dbReference>
<keyword id="KW-0131">Cell cycle</keyword>
<keyword id="KW-0132">Cell division</keyword>
<keyword id="KW-0159">Chromosome partition</keyword>
<keyword id="KW-0963">Cytoplasm</keyword>
<keyword id="KW-0229">DNA integration</keyword>
<keyword id="KW-0233">DNA recombination</keyword>
<keyword id="KW-0238">DNA-binding</keyword>
<organism>
    <name type="scientific">Vibrio vulnificus (strain CMCP6)</name>
    <dbReference type="NCBI Taxonomy" id="216895"/>
    <lineage>
        <taxon>Bacteria</taxon>
        <taxon>Pseudomonadati</taxon>
        <taxon>Pseudomonadota</taxon>
        <taxon>Gammaproteobacteria</taxon>
        <taxon>Vibrionales</taxon>
        <taxon>Vibrionaceae</taxon>
        <taxon>Vibrio</taxon>
    </lineage>
</organism>
<proteinExistence type="inferred from homology"/>
<evidence type="ECO:0000255" key="1">
    <source>
        <dbReference type="HAMAP-Rule" id="MF_01808"/>
    </source>
</evidence>
<evidence type="ECO:0000255" key="2">
    <source>
        <dbReference type="PROSITE-ProRule" id="PRU01246"/>
    </source>
</evidence>
<evidence type="ECO:0000255" key="3">
    <source>
        <dbReference type="PROSITE-ProRule" id="PRU01248"/>
    </source>
</evidence>
<comment type="function">
    <text evidence="1">Site-specific tyrosine recombinase, which acts by catalyzing the cutting and rejoining of the recombining DNA molecules. The XerC-XerD complex is essential to convert dimers of the bacterial chromosome into monomers to permit their segregation at cell division. It also contributes to the segregational stability of plasmids.</text>
</comment>
<comment type="subunit">
    <text evidence="1">Forms a cyclic heterotetrameric complex composed of two molecules of XerC and two molecules of XerD.</text>
</comment>
<comment type="subcellular location">
    <subcellularLocation>
        <location evidence="1">Cytoplasm</location>
    </subcellularLocation>
</comment>
<comment type="similarity">
    <text evidence="1">Belongs to the 'phage' integrase family. XerC subfamily.</text>
</comment>
<accession>Q7ZAI9</accession>
<name>XERC_VIBVU</name>
<feature type="chain" id="PRO_0000095345" description="Tyrosine recombinase XerC">
    <location>
        <begin position="1"/>
        <end position="316"/>
    </location>
</feature>
<feature type="domain" description="Core-binding (CB)" evidence="3">
    <location>
        <begin position="11"/>
        <end position="97"/>
    </location>
</feature>
<feature type="domain" description="Tyr recombinase" evidence="2">
    <location>
        <begin position="118"/>
        <end position="298"/>
    </location>
</feature>
<feature type="active site" evidence="1">
    <location>
        <position position="157"/>
    </location>
</feature>
<feature type="active site" evidence="1">
    <location>
        <position position="181"/>
    </location>
</feature>
<feature type="active site" evidence="1">
    <location>
        <position position="250"/>
    </location>
</feature>
<feature type="active site" evidence="1">
    <location>
        <position position="253"/>
    </location>
</feature>
<feature type="active site" evidence="1">
    <location>
        <position position="276"/>
    </location>
</feature>
<feature type="active site" description="O-(3'-phospho-DNA)-tyrosine intermediate" evidence="1">
    <location>
        <position position="285"/>
    </location>
</feature>
<sequence length="316" mass="35712">MTTASNTPLPSGLRKPLDQFYEYLRAEKGLSLHTQRNYKQQLETMAEHLHSMGLKAWPQVDAGWVRQLAGKGMREGMKASSIATRLSSLRSFFDFLILRGILTANPAKGVSAPRKKRPLPKNLDVDEVNQLLEVNEDDPLAIRDRAIMELMYGAGLRLAELVDIDVRDVHLRSGEIRVIGKGNKERKVPFAGMAVEWVGKWLKVRSGLADPSEPALFVSKLGTRISHRSVQKRMAEWGQKQAVASHITPHKLRHSFATHILESSNNLRAVQELLGHENISTTQIYTHLDFQHLADVYDQAHPRARKKSSQHKEEDE</sequence>
<protein>
    <recommendedName>
        <fullName evidence="1">Tyrosine recombinase XerC</fullName>
    </recommendedName>
</protein>
<reference key="1">
    <citation type="submission" date="2002-12" db="EMBL/GenBank/DDBJ databases">
        <title>Complete genome sequence of Vibrio vulnificus CMCP6.</title>
        <authorList>
            <person name="Rhee J.H."/>
            <person name="Kim S.Y."/>
            <person name="Chung S.S."/>
            <person name="Kim J.J."/>
            <person name="Moon Y.H."/>
            <person name="Jeong H."/>
            <person name="Choy H.E."/>
        </authorList>
    </citation>
    <scope>NUCLEOTIDE SEQUENCE [LARGE SCALE GENOMIC DNA]</scope>
    <source>
        <strain>CMCP6</strain>
    </source>
</reference>